<sequence>MTTPIIVTGTDTGVGKTVFSAALAGALEATYWKPVQAGLDEETDRLAVLRLSGLPETRLLAEAYRLTTPASPHLAAEIDGVAIDPEALVLPDTQGPLVVEGAGGLLVPLTRHVTYIDVFATWRAPVVLCARTTLGTINHTLLSIEALRARAIPLLGIAFIGDENAESERIIVELGRARRLGRLPHLAQLTTDALRAAFARNFNTADFLKETA</sequence>
<proteinExistence type="inferred from homology"/>
<reference key="1">
    <citation type="submission" date="2006-03" db="EMBL/GenBank/DDBJ databases">
        <title>Complete sequence of Rhodopseudomonas palustris BisB5.</title>
        <authorList>
            <consortium name="US DOE Joint Genome Institute"/>
            <person name="Copeland A."/>
            <person name="Lucas S."/>
            <person name="Lapidus A."/>
            <person name="Barry K."/>
            <person name="Detter J.C."/>
            <person name="Glavina del Rio T."/>
            <person name="Hammon N."/>
            <person name="Israni S."/>
            <person name="Dalin E."/>
            <person name="Tice H."/>
            <person name="Pitluck S."/>
            <person name="Chain P."/>
            <person name="Malfatti S."/>
            <person name="Shin M."/>
            <person name="Vergez L."/>
            <person name="Schmutz J."/>
            <person name="Larimer F."/>
            <person name="Land M."/>
            <person name="Hauser L."/>
            <person name="Pelletier D.A."/>
            <person name="Kyrpides N."/>
            <person name="Lykidis A."/>
            <person name="Oda Y."/>
            <person name="Harwood C.S."/>
            <person name="Richardson P."/>
        </authorList>
    </citation>
    <scope>NUCLEOTIDE SEQUENCE [LARGE SCALE GENOMIC DNA]</scope>
    <source>
        <strain>BisB5</strain>
    </source>
</reference>
<protein>
    <recommendedName>
        <fullName evidence="1">ATP-dependent dethiobiotin synthetase BioD</fullName>
        <ecNumber evidence="1">6.3.3.3</ecNumber>
    </recommendedName>
    <alternativeName>
        <fullName evidence="1">DTB synthetase</fullName>
        <shortName evidence="1">DTBS</shortName>
    </alternativeName>
    <alternativeName>
        <fullName evidence="1">Dethiobiotin synthase</fullName>
    </alternativeName>
</protein>
<comment type="function">
    <text evidence="1">Catalyzes a mechanistically unusual reaction, the ATP-dependent insertion of CO2 between the N7 and N8 nitrogen atoms of 7,8-diaminopelargonic acid (DAPA, also called 7,8-diammoniononanoate) to form a ureido ring.</text>
</comment>
<comment type="catalytic activity">
    <reaction evidence="1">
        <text>(7R,8S)-7,8-diammoniononanoate + CO2 + ATP = (4R,5S)-dethiobiotin + ADP + phosphate + 3 H(+)</text>
        <dbReference type="Rhea" id="RHEA:15805"/>
        <dbReference type="ChEBI" id="CHEBI:15378"/>
        <dbReference type="ChEBI" id="CHEBI:16526"/>
        <dbReference type="ChEBI" id="CHEBI:30616"/>
        <dbReference type="ChEBI" id="CHEBI:43474"/>
        <dbReference type="ChEBI" id="CHEBI:149469"/>
        <dbReference type="ChEBI" id="CHEBI:149473"/>
        <dbReference type="ChEBI" id="CHEBI:456216"/>
        <dbReference type="EC" id="6.3.3.3"/>
    </reaction>
</comment>
<comment type="cofactor">
    <cofactor evidence="1">
        <name>Mg(2+)</name>
        <dbReference type="ChEBI" id="CHEBI:18420"/>
    </cofactor>
</comment>
<comment type="pathway">
    <text evidence="1">Cofactor biosynthesis; biotin biosynthesis; biotin from 7,8-diaminononanoate: step 1/2.</text>
</comment>
<comment type="subunit">
    <text evidence="1">Homodimer.</text>
</comment>
<comment type="subcellular location">
    <subcellularLocation>
        <location evidence="1">Cytoplasm</location>
    </subcellularLocation>
</comment>
<comment type="similarity">
    <text evidence="1">Belongs to the dethiobiotin synthetase family.</text>
</comment>
<feature type="chain" id="PRO_0000302546" description="ATP-dependent dethiobiotin synthetase BioD">
    <location>
        <begin position="1"/>
        <end position="212"/>
    </location>
</feature>
<feature type="active site" evidence="1">
    <location>
        <position position="33"/>
    </location>
</feature>
<feature type="binding site" evidence="1">
    <location>
        <begin position="13"/>
        <end position="18"/>
    </location>
    <ligand>
        <name>ATP</name>
        <dbReference type="ChEBI" id="CHEBI:30616"/>
    </ligand>
</feature>
<feature type="binding site" evidence="1">
    <location>
        <position position="17"/>
    </location>
    <ligand>
        <name>Mg(2+)</name>
        <dbReference type="ChEBI" id="CHEBI:18420"/>
    </ligand>
</feature>
<feature type="binding site" evidence="1">
    <location>
        <begin position="100"/>
        <end position="103"/>
    </location>
    <ligand>
        <name>ATP</name>
        <dbReference type="ChEBI" id="CHEBI:30616"/>
    </ligand>
</feature>
<feature type="binding site" evidence="1">
    <location>
        <position position="100"/>
    </location>
    <ligand>
        <name>Mg(2+)</name>
        <dbReference type="ChEBI" id="CHEBI:18420"/>
    </ligand>
</feature>
<feature type="binding site" evidence="1">
    <location>
        <begin position="184"/>
        <end position="186"/>
    </location>
    <ligand>
        <name>ATP</name>
        <dbReference type="ChEBI" id="CHEBI:30616"/>
    </ligand>
</feature>
<name>BIOD_RHOPS</name>
<keyword id="KW-0067">ATP-binding</keyword>
<keyword id="KW-0093">Biotin biosynthesis</keyword>
<keyword id="KW-0963">Cytoplasm</keyword>
<keyword id="KW-0436">Ligase</keyword>
<keyword id="KW-0460">Magnesium</keyword>
<keyword id="KW-0479">Metal-binding</keyword>
<keyword id="KW-0547">Nucleotide-binding</keyword>
<evidence type="ECO:0000255" key="1">
    <source>
        <dbReference type="HAMAP-Rule" id="MF_00336"/>
    </source>
</evidence>
<dbReference type="EC" id="6.3.3.3" evidence="1"/>
<dbReference type="EMBL" id="CP000283">
    <property type="protein sequence ID" value="ABE41456.1"/>
    <property type="molecule type" value="Genomic_DNA"/>
</dbReference>
<dbReference type="SMR" id="Q130N3"/>
<dbReference type="STRING" id="316057.RPD_4239"/>
<dbReference type="KEGG" id="rpd:RPD_4239"/>
<dbReference type="eggNOG" id="COG0132">
    <property type="taxonomic scope" value="Bacteria"/>
</dbReference>
<dbReference type="HOGENOM" id="CLU_072551_2_0_5"/>
<dbReference type="BioCyc" id="RPAL316057:RPD_RS21315-MONOMER"/>
<dbReference type="UniPathway" id="UPA00078">
    <property type="reaction ID" value="UER00161"/>
</dbReference>
<dbReference type="Proteomes" id="UP000001818">
    <property type="component" value="Chromosome"/>
</dbReference>
<dbReference type="GO" id="GO:0005829">
    <property type="term" value="C:cytosol"/>
    <property type="evidence" value="ECO:0007669"/>
    <property type="project" value="TreeGrafter"/>
</dbReference>
<dbReference type="GO" id="GO:0005524">
    <property type="term" value="F:ATP binding"/>
    <property type="evidence" value="ECO:0007669"/>
    <property type="project" value="UniProtKB-UniRule"/>
</dbReference>
<dbReference type="GO" id="GO:0004141">
    <property type="term" value="F:dethiobiotin synthase activity"/>
    <property type="evidence" value="ECO:0007669"/>
    <property type="project" value="UniProtKB-UniRule"/>
</dbReference>
<dbReference type="GO" id="GO:0000287">
    <property type="term" value="F:magnesium ion binding"/>
    <property type="evidence" value="ECO:0007669"/>
    <property type="project" value="UniProtKB-UniRule"/>
</dbReference>
<dbReference type="GO" id="GO:0009102">
    <property type="term" value="P:biotin biosynthetic process"/>
    <property type="evidence" value="ECO:0007669"/>
    <property type="project" value="UniProtKB-UniRule"/>
</dbReference>
<dbReference type="CDD" id="cd03109">
    <property type="entry name" value="DTBS"/>
    <property type="match status" value="1"/>
</dbReference>
<dbReference type="Gene3D" id="3.40.50.300">
    <property type="entry name" value="P-loop containing nucleotide triphosphate hydrolases"/>
    <property type="match status" value="1"/>
</dbReference>
<dbReference type="HAMAP" id="MF_00336">
    <property type="entry name" value="BioD"/>
    <property type="match status" value="1"/>
</dbReference>
<dbReference type="InterPro" id="IPR004472">
    <property type="entry name" value="DTB_synth_BioD"/>
</dbReference>
<dbReference type="InterPro" id="IPR027417">
    <property type="entry name" value="P-loop_NTPase"/>
</dbReference>
<dbReference type="NCBIfam" id="TIGR00347">
    <property type="entry name" value="bioD"/>
    <property type="match status" value="1"/>
</dbReference>
<dbReference type="PANTHER" id="PTHR43210:SF2">
    <property type="entry name" value="ATP-DEPENDENT DETHIOBIOTIN SYNTHETASE BIOD 2"/>
    <property type="match status" value="1"/>
</dbReference>
<dbReference type="PANTHER" id="PTHR43210">
    <property type="entry name" value="DETHIOBIOTIN SYNTHETASE"/>
    <property type="match status" value="1"/>
</dbReference>
<dbReference type="Pfam" id="PF13500">
    <property type="entry name" value="AAA_26"/>
    <property type="match status" value="1"/>
</dbReference>
<dbReference type="PIRSF" id="PIRSF006755">
    <property type="entry name" value="DTB_synth"/>
    <property type="match status" value="1"/>
</dbReference>
<dbReference type="SUPFAM" id="SSF52540">
    <property type="entry name" value="P-loop containing nucleoside triphosphate hydrolases"/>
    <property type="match status" value="1"/>
</dbReference>
<gene>
    <name evidence="1" type="primary">bioD</name>
    <name type="ordered locus">RPD_4239</name>
</gene>
<organism>
    <name type="scientific">Rhodopseudomonas palustris (strain BisB5)</name>
    <dbReference type="NCBI Taxonomy" id="316057"/>
    <lineage>
        <taxon>Bacteria</taxon>
        <taxon>Pseudomonadati</taxon>
        <taxon>Pseudomonadota</taxon>
        <taxon>Alphaproteobacteria</taxon>
        <taxon>Hyphomicrobiales</taxon>
        <taxon>Nitrobacteraceae</taxon>
        <taxon>Rhodopseudomonas</taxon>
    </lineage>
</organism>
<accession>Q130N3</accession>